<reference key="1">
    <citation type="journal article" date="2012" name="BMC Microbiol.">
        <title>Genome sequence of Desulfitobacterium hafniense DCB-2, a Gram-positive anaerobe capable of dehalogenation and metal reduction.</title>
        <authorList>
            <person name="Kim S.H."/>
            <person name="Harzman C."/>
            <person name="Davis J.K."/>
            <person name="Hutcheson R."/>
            <person name="Broderick J.B."/>
            <person name="Marsh T.L."/>
            <person name="Tiedje J.M."/>
        </authorList>
    </citation>
    <scope>NUCLEOTIDE SEQUENCE [LARGE SCALE GENOMIC DNA]</scope>
    <source>
        <strain>DSM 10664 / DCB-2</strain>
    </source>
</reference>
<evidence type="ECO:0000255" key="1">
    <source>
        <dbReference type="HAMAP-Rule" id="MF_01678"/>
    </source>
</evidence>
<evidence type="ECO:0000305" key="2"/>
<organism>
    <name type="scientific">Desulfitobacterium hafniense (strain DSM 10664 / DCB-2)</name>
    <dbReference type="NCBI Taxonomy" id="272564"/>
    <lineage>
        <taxon>Bacteria</taxon>
        <taxon>Bacillati</taxon>
        <taxon>Bacillota</taxon>
        <taxon>Clostridia</taxon>
        <taxon>Eubacteriales</taxon>
        <taxon>Desulfitobacteriaceae</taxon>
        <taxon>Desulfitobacterium</taxon>
    </lineage>
</organism>
<gene>
    <name evidence="1" type="primary">mtnA</name>
    <name type="ordered locus">Dhaf_3765</name>
</gene>
<sequence length="345" mass="37449">MKALEWMGDSLKILDQTRLPVEIKYRMAATYEEVAEAIEKMEVRGAPAIGAAAAYGYALGAIGYSGELADLPAHMEKVQHRLAETRPTAVNLFWALRRMEDRLRDQHEAKELAEIRQALVAEAENIAEDDRRVNRLIGEHGNAIVTAEANILTHCNAGALATVEYGTALGVIRAAQQAGKKVHVYAGETRPFLQGARLTALELMNDHIPVTLIADNMAGFLMQQGNIDLVIVGADRIAANGDTANKIGTYSLAVLAHAHGIPFYVAAPTSTIDLKVPSGQDIPIEERNPKELREVFGVQVAPPEVPVYNPAFDVTPAKLITGIITEKGIVTSPYSVNLLKMMVRS</sequence>
<dbReference type="EC" id="5.3.1.23" evidence="1"/>
<dbReference type="EMBL" id="CP001336">
    <property type="protein sequence ID" value="ACL21781.1"/>
    <property type="molecule type" value="Genomic_DNA"/>
</dbReference>
<dbReference type="RefSeq" id="WP_015944768.1">
    <property type="nucleotide sequence ID" value="NC_011830.1"/>
</dbReference>
<dbReference type="SMR" id="B8FRM1"/>
<dbReference type="KEGG" id="dhd:Dhaf_3765"/>
<dbReference type="HOGENOM" id="CLU_016218_1_2_9"/>
<dbReference type="UniPathway" id="UPA00904">
    <property type="reaction ID" value="UER00874"/>
</dbReference>
<dbReference type="Proteomes" id="UP000007726">
    <property type="component" value="Chromosome"/>
</dbReference>
<dbReference type="GO" id="GO:0046523">
    <property type="term" value="F:S-methyl-5-thioribose-1-phosphate isomerase activity"/>
    <property type="evidence" value="ECO:0007669"/>
    <property type="project" value="UniProtKB-UniRule"/>
</dbReference>
<dbReference type="GO" id="GO:0019509">
    <property type="term" value="P:L-methionine salvage from methylthioadenosine"/>
    <property type="evidence" value="ECO:0007669"/>
    <property type="project" value="UniProtKB-UniRule"/>
</dbReference>
<dbReference type="FunFam" id="1.20.120.420:FF:000003">
    <property type="entry name" value="Methylthioribose-1-phosphate isomerase"/>
    <property type="match status" value="1"/>
</dbReference>
<dbReference type="FunFam" id="3.40.50.10470:FF:000006">
    <property type="entry name" value="Methylthioribose-1-phosphate isomerase"/>
    <property type="match status" value="1"/>
</dbReference>
<dbReference type="Gene3D" id="1.20.120.420">
    <property type="entry name" value="translation initiation factor eif-2b, domain 1"/>
    <property type="match status" value="1"/>
</dbReference>
<dbReference type="Gene3D" id="3.40.50.10470">
    <property type="entry name" value="Translation initiation factor eif-2b, domain 2"/>
    <property type="match status" value="1"/>
</dbReference>
<dbReference type="HAMAP" id="MF_01678">
    <property type="entry name" value="Salvage_MtnA"/>
    <property type="match status" value="1"/>
</dbReference>
<dbReference type="InterPro" id="IPR000649">
    <property type="entry name" value="IF-2B-related"/>
</dbReference>
<dbReference type="InterPro" id="IPR005251">
    <property type="entry name" value="IF-M1Pi"/>
</dbReference>
<dbReference type="InterPro" id="IPR042529">
    <property type="entry name" value="IF_2B-like_C"/>
</dbReference>
<dbReference type="InterPro" id="IPR011559">
    <property type="entry name" value="Initiation_fac_2B_a/b/d"/>
</dbReference>
<dbReference type="InterPro" id="IPR027363">
    <property type="entry name" value="M1Pi_N"/>
</dbReference>
<dbReference type="InterPro" id="IPR037171">
    <property type="entry name" value="NagB/RpiA_transferase-like"/>
</dbReference>
<dbReference type="NCBIfam" id="TIGR00524">
    <property type="entry name" value="eIF-2B_rel"/>
    <property type="match status" value="1"/>
</dbReference>
<dbReference type="NCBIfam" id="NF004326">
    <property type="entry name" value="PRK05720.1"/>
    <property type="match status" value="1"/>
</dbReference>
<dbReference type="NCBIfam" id="TIGR00512">
    <property type="entry name" value="salvage_mtnA"/>
    <property type="match status" value="1"/>
</dbReference>
<dbReference type="PANTHER" id="PTHR43475">
    <property type="entry name" value="METHYLTHIORIBOSE-1-PHOSPHATE ISOMERASE"/>
    <property type="match status" value="1"/>
</dbReference>
<dbReference type="PANTHER" id="PTHR43475:SF1">
    <property type="entry name" value="METHYLTHIORIBOSE-1-PHOSPHATE ISOMERASE"/>
    <property type="match status" value="1"/>
</dbReference>
<dbReference type="Pfam" id="PF01008">
    <property type="entry name" value="IF-2B"/>
    <property type="match status" value="1"/>
</dbReference>
<dbReference type="SUPFAM" id="SSF100950">
    <property type="entry name" value="NagB/RpiA/CoA transferase-like"/>
    <property type="match status" value="1"/>
</dbReference>
<comment type="function">
    <text evidence="1">Catalyzes the interconversion of methylthioribose-1-phosphate (MTR-1-P) into methylthioribulose-1-phosphate (MTRu-1-P).</text>
</comment>
<comment type="catalytic activity">
    <reaction evidence="1">
        <text>5-(methylsulfanyl)-alpha-D-ribose 1-phosphate = 5-(methylsulfanyl)-D-ribulose 1-phosphate</text>
        <dbReference type="Rhea" id="RHEA:19989"/>
        <dbReference type="ChEBI" id="CHEBI:58533"/>
        <dbReference type="ChEBI" id="CHEBI:58548"/>
        <dbReference type="EC" id="5.3.1.23"/>
    </reaction>
</comment>
<comment type="pathway">
    <text evidence="1">Amino-acid biosynthesis; L-methionine biosynthesis via salvage pathway; L-methionine from S-methyl-5-thio-alpha-D-ribose 1-phosphate: step 1/6.</text>
</comment>
<comment type="similarity">
    <text evidence="2">Belongs to the eIF-2B alpha/beta/delta subunits family. MtnA subfamily.</text>
</comment>
<feature type="chain" id="PRO_1000187355" description="Methylthioribose-1-phosphate isomerase">
    <location>
        <begin position="1"/>
        <end position="345"/>
    </location>
</feature>
<feature type="active site" description="Proton donor" evidence="1">
    <location>
        <position position="235"/>
    </location>
</feature>
<feature type="binding site" evidence="1">
    <location>
        <begin position="44"/>
        <end position="46"/>
    </location>
    <ligand>
        <name>substrate</name>
    </ligand>
</feature>
<feature type="binding site" evidence="1">
    <location>
        <position position="86"/>
    </location>
    <ligand>
        <name>substrate</name>
    </ligand>
</feature>
<feature type="binding site" evidence="1">
    <location>
        <position position="194"/>
    </location>
    <ligand>
        <name>substrate</name>
    </ligand>
</feature>
<feature type="binding site" evidence="1">
    <location>
        <begin position="245"/>
        <end position="246"/>
    </location>
    <ligand>
        <name>substrate</name>
    </ligand>
</feature>
<feature type="site" description="Transition state stabilizer" evidence="1">
    <location>
        <position position="155"/>
    </location>
</feature>
<accession>B8FRM1</accession>
<name>MTNA_DESHD</name>
<keyword id="KW-0028">Amino-acid biosynthesis</keyword>
<keyword id="KW-0413">Isomerase</keyword>
<keyword id="KW-0486">Methionine biosynthesis</keyword>
<proteinExistence type="inferred from homology"/>
<protein>
    <recommendedName>
        <fullName evidence="1">Methylthioribose-1-phosphate isomerase</fullName>
        <shortName evidence="1">M1Pi</shortName>
        <shortName evidence="1">MTR-1-P isomerase</shortName>
        <ecNumber evidence="1">5.3.1.23</ecNumber>
    </recommendedName>
    <alternativeName>
        <fullName evidence="1">S-methyl-5-thioribose-1-phosphate isomerase</fullName>
    </alternativeName>
</protein>